<dbReference type="EMBL" id="CP001144">
    <property type="protein sequence ID" value="ACH75524.1"/>
    <property type="molecule type" value="Genomic_DNA"/>
</dbReference>
<dbReference type="RefSeq" id="WP_001196059.1">
    <property type="nucleotide sequence ID" value="NC_011205.1"/>
</dbReference>
<dbReference type="SMR" id="B5FSA4"/>
<dbReference type="KEGG" id="sed:SeD_A4790"/>
<dbReference type="HOGENOM" id="CLU_078938_4_1_6"/>
<dbReference type="Proteomes" id="UP000008322">
    <property type="component" value="Chromosome"/>
</dbReference>
<dbReference type="GO" id="GO:1990904">
    <property type="term" value="C:ribonucleoprotein complex"/>
    <property type="evidence" value="ECO:0007669"/>
    <property type="project" value="UniProtKB-KW"/>
</dbReference>
<dbReference type="GO" id="GO:0005840">
    <property type="term" value="C:ribosome"/>
    <property type="evidence" value="ECO:0007669"/>
    <property type="project" value="UniProtKB-KW"/>
</dbReference>
<dbReference type="GO" id="GO:0019843">
    <property type="term" value="F:rRNA binding"/>
    <property type="evidence" value="ECO:0007669"/>
    <property type="project" value="UniProtKB-UniRule"/>
</dbReference>
<dbReference type="GO" id="GO:0003735">
    <property type="term" value="F:structural constituent of ribosome"/>
    <property type="evidence" value="ECO:0007669"/>
    <property type="project" value="InterPro"/>
</dbReference>
<dbReference type="GO" id="GO:0006412">
    <property type="term" value="P:translation"/>
    <property type="evidence" value="ECO:0007669"/>
    <property type="project" value="UniProtKB-UniRule"/>
</dbReference>
<dbReference type="FunFam" id="3.10.430.100:FF:000001">
    <property type="entry name" value="50S ribosomal protein L9"/>
    <property type="match status" value="1"/>
</dbReference>
<dbReference type="FunFam" id="3.40.5.10:FF:000001">
    <property type="entry name" value="50S ribosomal protein L9"/>
    <property type="match status" value="1"/>
</dbReference>
<dbReference type="Gene3D" id="3.10.430.100">
    <property type="entry name" value="Ribosomal protein L9, C-terminal domain"/>
    <property type="match status" value="1"/>
</dbReference>
<dbReference type="Gene3D" id="3.40.5.10">
    <property type="entry name" value="Ribosomal protein L9, N-terminal domain"/>
    <property type="match status" value="1"/>
</dbReference>
<dbReference type="HAMAP" id="MF_00503">
    <property type="entry name" value="Ribosomal_bL9"/>
    <property type="match status" value="1"/>
</dbReference>
<dbReference type="InterPro" id="IPR000244">
    <property type="entry name" value="Ribosomal_bL9"/>
</dbReference>
<dbReference type="InterPro" id="IPR009027">
    <property type="entry name" value="Ribosomal_bL9/RNase_H1_N"/>
</dbReference>
<dbReference type="InterPro" id="IPR020594">
    <property type="entry name" value="Ribosomal_bL9_bac/chp"/>
</dbReference>
<dbReference type="InterPro" id="IPR020069">
    <property type="entry name" value="Ribosomal_bL9_C"/>
</dbReference>
<dbReference type="InterPro" id="IPR036791">
    <property type="entry name" value="Ribosomal_bL9_C_sf"/>
</dbReference>
<dbReference type="InterPro" id="IPR020070">
    <property type="entry name" value="Ribosomal_bL9_N"/>
</dbReference>
<dbReference type="InterPro" id="IPR036935">
    <property type="entry name" value="Ribosomal_bL9_N_sf"/>
</dbReference>
<dbReference type="NCBIfam" id="TIGR00158">
    <property type="entry name" value="L9"/>
    <property type="match status" value="1"/>
</dbReference>
<dbReference type="PANTHER" id="PTHR21368">
    <property type="entry name" value="50S RIBOSOMAL PROTEIN L9"/>
    <property type="match status" value="1"/>
</dbReference>
<dbReference type="Pfam" id="PF03948">
    <property type="entry name" value="Ribosomal_L9_C"/>
    <property type="match status" value="1"/>
</dbReference>
<dbReference type="Pfam" id="PF01281">
    <property type="entry name" value="Ribosomal_L9_N"/>
    <property type="match status" value="1"/>
</dbReference>
<dbReference type="SUPFAM" id="SSF55658">
    <property type="entry name" value="L9 N-domain-like"/>
    <property type="match status" value="1"/>
</dbReference>
<dbReference type="SUPFAM" id="SSF55653">
    <property type="entry name" value="Ribosomal protein L9 C-domain"/>
    <property type="match status" value="1"/>
</dbReference>
<dbReference type="PROSITE" id="PS00651">
    <property type="entry name" value="RIBOSOMAL_L9"/>
    <property type="match status" value="1"/>
</dbReference>
<gene>
    <name evidence="1" type="primary">rplI</name>
    <name type="ordered locus">SeD_A4790</name>
</gene>
<proteinExistence type="inferred from homology"/>
<evidence type="ECO:0000255" key="1">
    <source>
        <dbReference type="HAMAP-Rule" id="MF_00503"/>
    </source>
</evidence>
<evidence type="ECO:0000305" key="2"/>
<feature type="chain" id="PRO_1000126964" description="Large ribosomal subunit protein bL9">
    <location>
        <begin position="1"/>
        <end position="149"/>
    </location>
</feature>
<accession>B5FSA4</accession>
<keyword id="KW-0687">Ribonucleoprotein</keyword>
<keyword id="KW-0689">Ribosomal protein</keyword>
<keyword id="KW-0694">RNA-binding</keyword>
<keyword id="KW-0699">rRNA-binding</keyword>
<reference key="1">
    <citation type="journal article" date="2011" name="J. Bacteriol.">
        <title>Comparative genomics of 28 Salmonella enterica isolates: evidence for CRISPR-mediated adaptive sublineage evolution.</title>
        <authorList>
            <person name="Fricke W.F."/>
            <person name="Mammel M.K."/>
            <person name="McDermott P.F."/>
            <person name="Tartera C."/>
            <person name="White D.G."/>
            <person name="Leclerc J.E."/>
            <person name="Ravel J."/>
            <person name="Cebula T.A."/>
        </authorList>
    </citation>
    <scope>NUCLEOTIDE SEQUENCE [LARGE SCALE GENOMIC DNA]</scope>
    <source>
        <strain>CT_02021853</strain>
    </source>
</reference>
<sequence length="149" mass="15784">MQVILLDKVANLGSLGDQVNVKAGYARNFLVPKGKAVPATKKNVEYFEARRAELEAKLADVLAAANARAEKINALETVTIASKAGDEGKLFGSIGTRDIADAVTAAGVDVAKSEVRLPNGVLRTTGEHEVNFQVHSEVFAKVIINVVAE</sequence>
<protein>
    <recommendedName>
        <fullName evidence="1">Large ribosomal subunit protein bL9</fullName>
    </recommendedName>
    <alternativeName>
        <fullName evidence="2">50S ribosomal protein L9</fullName>
    </alternativeName>
</protein>
<comment type="function">
    <text evidence="1">Binds to the 23S rRNA.</text>
</comment>
<comment type="similarity">
    <text evidence="1">Belongs to the bacterial ribosomal protein bL9 family.</text>
</comment>
<name>RL9_SALDC</name>
<organism>
    <name type="scientific">Salmonella dublin (strain CT_02021853)</name>
    <dbReference type="NCBI Taxonomy" id="439851"/>
    <lineage>
        <taxon>Bacteria</taxon>
        <taxon>Pseudomonadati</taxon>
        <taxon>Pseudomonadota</taxon>
        <taxon>Gammaproteobacteria</taxon>
        <taxon>Enterobacterales</taxon>
        <taxon>Enterobacteriaceae</taxon>
        <taxon>Salmonella</taxon>
    </lineage>
</organism>